<name>YO45_SCHPO</name>
<accession>Q9HGN5</accession>
<protein>
    <recommendedName>
        <fullName>Putative E3 ubiquitin-protein ligase C36B7.05c</fullName>
        <ecNumber>2.3.2.27</ecNumber>
    </recommendedName>
    <alternativeName>
        <fullName>RING-type E3 ubiquitin transferase C36B7.05c</fullName>
    </alternativeName>
</protein>
<keyword id="KW-0963">Cytoplasm</keyword>
<keyword id="KW-0967">Endosome</keyword>
<keyword id="KW-0472">Membrane</keyword>
<keyword id="KW-0479">Metal-binding</keyword>
<keyword id="KW-0539">Nucleus</keyword>
<keyword id="KW-0597">Phosphoprotein</keyword>
<keyword id="KW-1185">Reference proteome</keyword>
<keyword id="KW-0808">Transferase</keyword>
<keyword id="KW-0833">Ubl conjugation pathway</keyword>
<keyword id="KW-0926">Vacuole</keyword>
<keyword id="KW-0862">Zinc</keyword>
<keyword id="KW-0863">Zinc-finger</keyword>
<organism>
    <name type="scientific">Schizosaccharomyces pombe (strain 972 / ATCC 24843)</name>
    <name type="common">Fission yeast</name>
    <dbReference type="NCBI Taxonomy" id="284812"/>
    <lineage>
        <taxon>Eukaryota</taxon>
        <taxon>Fungi</taxon>
        <taxon>Dikarya</taxon>
        <taxon>Ascomycota</taxon>
        <taxon>Taphrinomycotina</taxon>
        <taxon>Schizosaccharomycetes</taxon>
        <taxon>Schizosaccharomycetales</taxon>
        <taxon>Schizosaccharomycetaceae</taxon>
        <taxon>Schizosaccharomyces</taxon>
    </lineage>
</organism>
<reference key="1">
    <citation type="journal article" date="2002" name="Nature">
        <title>The genome sequence of Schizosaccharomyces pombe.</title>
        <authorList>
            <person name="Wood V."/>
            <person name="Gwilliam R."/>
            <person name="Rajandream M.A."/>
            <person name="Lyne M.H."/>
            <person name="Lyne R."/>
            <person name="Stewart A."/>
            <person name="Sgouros J.G."/>
            <person name="Peat N."/>
            <person name="Hayles J."/>
            <person name="Baker S.G."/>
            <person name="Basham D."/>
            <person name="Bowman S."/>
            <person name="Brooks K."/>
            <person name="Brown D."/>
            <person name="Brown S."/>
            <person name="Chillingworth T."/>
            <person name="Churcher C.M."/>
            <person name="Collins M."/>
            <person name="Connor R."/>
            <person name="Cronin A."/>
            <person name="Davis P."/>
            <person name="Feltwell T."/>
            <person name="Fraser A."/>
            <person name="Gentles S."/>
            <person name="Goble A."/>
            <person name="Hamlin N."/>
            <person name="Harris D.E."/>
            <person name="Hidalgo J."/>
            <person name="Hodgson G."/>
            <person name="Holroyd S."/>
            <person name="Hornsby T."/>
            <person name="Howarth S."/>
            <person name="Huckle E.J."/>
            <person name="Hunt S."/>
            <person name="Jagels K."/>
            <person name="James K.D."/>
            <person name="Jones L."/>
            <person name="Jones M."/>
            <person name="Leather S."/>
            <person name="McDonald S."/>
            <person name="McLean J."/>
            <person name="Mooney P."/>
            <person name="Moule S."/>
            <person name="Mungall K.L."/>
            <person name="Murphy L.D."/>
            <person name="Niblett D."/>
            <person name="Odell C."/>
            <person name="Oliver K."/>
            <person name="O'Neil S."/>
            <person name="Pearson D."/>
            <person name="Quail M.A."/>
            <person name="Rabbinowitsch E."/>
            <person name="Rutherford K.M."/>
            <person name="Rutter S."/>
            <person name="Saunders D."/>
            <person name="Seeger K."/>
            <person name="Sharp S."/>
            <person name="Skelton J."/>
            <person name="Simmonds M.N."/>
            <person name="Squares R."/>
            <person name="Squares S."/>
            <person name="Stevens K."/>
            <person name="Taylor K."/>
            <person name="Taylor R.G."/>
            <person name="Tivey A."/>
            <person name="Walsh S.V."/>
            <person name="Warren T."/>
            <person name="Whitehead S."/>
            <person name="Woodward J.R."/>
            <person name="Volckaert G."/>
            <person name="Aert R."/>
            <person name="Robben J."/>
            <person name="Grymonprez B."/>
            <person name="Weltjens I."/>
            <person name="Vanstreels E."/>
            <person name="Rieger M."/>
            <person name="Schaefer M."/>
            <person name="Mueller-Auer S."/>
            <person name="Gabel C."/>
            <person name="Fuchs M."/>
            <person name="Duesterhoeft A."/>
            <person name="Fritzc C."/>
            <person name="Holzer E."/>
            <person name="Moestl D."/>
            <person name="Hilbert H."/>
            <person name="Borzym K."/>
            <person name="Langer I."/>
            <person name="Beck A."/>
            <person name="Lehrach H."/>
            <person name="Reinhardt R."/>
            <person name="Pohl T.M."/>
            <person name="Eger P."/>
            <person name="Zimmermann W."/>
            <person name="Wedler H."/>
            <person name="Wambutt R."/>
            <person name="Purnelle B."/>
            <person name="Goffeau A."/>
            <person name="Cadieu E."/>
            <person name="Dreano S."/>
            <person name="Gloux S."/>
            <person name="Lelaure V."/>
            <person name="Mottier S."/>
            <person name="Galibert F."/>
            <person name="Aves S.J."/>
            <person name="Xiang Z."/>
            <person name="Hunt C."/>
            <person name="Moore K."/>
            <person name="Hurst S.M."/>
            <person name="Lucas M."/>
            <person name="Rochet M."/>
            <person name="Gaillardin C."/>
            <person name="Tallada V.A."/>
            <person name="Garzon A."/>
            <person name="Thode G."/>
            <person name="Daga R.R."/>
            <person name="Cruzado L."/>
            <person name="Jimenez J."/>
            <person name="Sanchez M."/>
            <person name="del Rey F."/>
            <person name="Benito J."/>
            <person name="Dominguez A."/>
            <person name="Revuelta J.L."/>
            <person name="Moreno S."/>
            <person name="Armstrong J."/>
            <person name="Forsburg S.L."/>
            <person name="Cerutti L."/>
            <person name="Lowe T."/>
            <person name="McCombie W.R."/>
            <person name="Paulsen I."/>
            <person name="Potashkin J."/>
            <person name="Shpakovski G.V."/>
            <person name="Ussery D."/>
            <person name="Barrell B.G."/>
            <person name="Nurse P."/>
        </authorList>
    </citation>
    <scope>NUCLEOTIDE SEQUENCE [LARGE SCALE GENOMIC DNA]</scope>
    <source>
        <strain>972 / ATCC 24843</strain>
    </source>
</reference>
<reference key="2">
    <citation type="journal article" date="2006" name="Nat. Biotechnol.">
        <title>ORFeome cloning and global analysis of protein localization in the fission yeast Schizosaccharomyces pombe.</title>
        <authorList>
            <person name="Matsuyama A."/>
            <person name="Arai R."/>
            <person name="Yashiroda Y."/>
            <person name="Shirai A."/>
            <person name="Kamata A."/>
            <person name="Sekido S."/>
            <person name="Kobayashi Y."/>
            <person name="Hashimoto A."/>
            <person name="Hamamoto M."/>
            <person name="Hiraoka Y."/>
            <person name="Horinouchi S."/>
            <person name="Yoshida M."/>
        </authorList>
    </citation>
    <scope>SUBCELLULAR LOCATION [LARGE SCALE ANALYSIS]</scope>
</reference>
<reference key="3">
    <citation type="journal article" date="2008" name="J. Proteome Res.">
        <title>Phosphoproteome analysis of fission yeast.</title>
        <authorList>
            <person name="Wilson-Grady J.T."/>
            <person name="Villen J."/>
            <person name="Gygi S.P."/>
        </authorList>
    </citation>
    <scope>PHOSPHORYLATION [LARGE SCALE ANALYSIS] AT SER-200</scope>
    <scope>IDENTIFICATION BY MASS SPECTROMETRY</scope>
</reference>
<feature type="chain" id="PRO_0000310489" description="Putative E3 ubiquitin-protein ligase C36B7.05c">
    <location>
        <begin position="1"/>
        <end position="279"/>
    </location>
</feature>
<feature type="zinc finger region" description="FYVE-type" evidence="2">
    <location>
        <begin position="27"/>
        <end position="122"/>
    </location>
</feature>
<feature type="zinc finger region" description="RING-type; atypical" evidence="3">
    <location>
        <begin position="230"/>
        <end position="273"/>
    </location>
</feature>
<feature type="binding site" evidence="2">
    <location>
        <position position="33"/>
    </location>
    <ligand>
        <name>Zn(2+)</name>
        <dbReference type="ChEBI" id="CHEBI:29105"/>
        <label>1</label>
    </ligand>
</feature>
<feature type="binding site" evidence="2">
    <location>
        <position position="36"/>
    </location>
    <ligand>
        <name>Zn(2+)</name>
        <dbReference type="ChEBI" id="CHEBI:29105"/>
        <label>1</label>
    </ligand>
</feature>
<feature type="binding site" evidence="2">
    <location>
        <position position="49"/>
    </location>
    <ligand>
        <name>Zn(2+)</name>
        <dbReference type="ChEBI" id="CHEBI:29105"/>
        <label>2</label>
    </ligand>
</feature>
<feature type="binding site" evidence="2">
    <location>
        <position position="52"/>
    </location>
    <ligand>
        <name>Zn(2+)</name>
        <dbReference type="ChEBI" id="CHEBI:29105"/>
        <label>2</label>
    </ligand>
</feature>
<feature type="binding site" evidence="2">
    <location>
        <position position="57"/>
    </location>
    <ligand>
        <name>Zn(2+)</name>
        <dbReference type="ChEBI" id="CHEBI:29105"/>
        <label>1</label>
    </ligand>
</feature>
<feature type="binding site" evidence="2">
    <location>
        <position position="60"/>
    </location>
    <ligand>
        <name>Zn(2+)</name>
        <dbReference type="ChEBI" id="CHEBI:29105"/>
        <label>1</label>
    </ligand>
</feature>
<feature type="binding site" evidence="2">
    <location>
        <position position="114"/>
    </location>
    <ligand>
        <name>Zn(2+)</name>
        <dbReference type="ChEBI" id="CHEBI:29105"/>
        <label>2</label>
    </ligand>
</feature>
<feature type="binding site" evidence="2">
    <location>
        <position position="117"/>
    </location>
    <ligand>
        <name>Zn(2+)</name>
        <dbReference type="ChEBI" id="CHEBI:29105"/>
        <label>2</label>
    </ligand>
</feature>
<feature type="modified residue" description="Phosphoserine" evidence="5">
    <location>
        <position position="200"/>
    </location>
</feature>
<evidence type="ECO:0000250" key="1"/>
<evidence type="ECO:0000255" key="2">
    <source>
        <dbReference type="PROSITE-ProRule" id="PRU00091"/>
    </source>
</evidence>
<evidence type="ECO:0000255" key="3">
    <source>
        <dbReference type="PROSITE-ProRule" id="PRU00175"/>
    </source>
</evidence>
<evidence type="ECO:0000269" key="4">
    <source>
    </source>
</evidence>
<evidence type="ECO:0000269" key="5">
    <source>
    </source>
</evidence>
<comment type="function">
    <text evidence="1">Functions as an E3 ubiquitin-protein ligase. Binds phospholipid vesicles containing phosphatidylinositol 3-phosphate.</text>
</comment>
<comment type="catalytic activity">
    <reaction>
        <text>S-ubiquitinyl-[E2 ubiquitin-conjugating enzyme]-L-cysteine + [acceptor protein]-L-lysine = [E2 ubiquitin-conjugating enzyme]-L-cysteine + N(6)-ubiquitinyl-[acceptor protein]-L-lysine.</text>
        <dbReference type="EC" id="2.3.2.27"/>
    </reaction>
</comment>
<comment type="pathway">
    <text>Protein modification; protein ubiquitination.</text>
</comment>
<comment type="subcellular location">
    <subcellularLocation>
        <location evidence="4">Cytoplasm</location>
    </subcellularLocation>
    <subcellularLocation>
        <location evidence="4">Nucleus</location>
    </subcellularLocation>
    <subcellularLocation>
        <location evidence="1">Endosome membrane</location>
        <topology evidence="1">Peripheral membrane protein</topology>
    </subcellularLocation>
    <subcellularLocation>
        <location evidence="1">Vacuole membrane</location>
        <topology evidence="1">Peripheral membrane protein</topology>
    </subcellularLocation>
</comment>
<sequence length="279" mass="31771">MDEDETTYPEALRRLLIETPAAIWQLDDESAQCNNCGGPFTWFRRRHHCRWCGKLFCYNCCNSFAKLPVSSVSVDPTEDLIPQDMFIRDPDFLANDNDDDNDSQDSSWINVRVCVNCRQQLSELKELDLPYPITTCLNDDTTTRSNNQVIQSSCGNNLQRIEEPDDFVECPVCYAPLSSFKTLSERESHVANCLSNNSSSPRNMTEFLKHARRYISMQLSETSPCLGQECIICFEEFAAGDRVARIEYCLCIFHLKCYRDWLSTGAAGCPVHAATLHLS</sequence>
<gene>
    <name type="ORF">SPBC36B7.05c</name>
</gene>
<dbReference type="EC" id="2.3.2.27"/>
<dbReference type="EMBL" id="CU329671">
    <property type="protein sequence ID" value="CAC05726.1"/>
    <property type="molecule type" value="Genomic_DNA"/>
</dbReference>
<dbReference type="SMR" id="Q9HGN5"/>
<dbReference type="BioGRID" id="277503">
    <property type="interactions" value="25"/>
</dbReference>
<dbReference type="FunCoup" id="Q9HGN5">
    <property type="interactions" value="40"/>
</dbReference>
<dbReference type="STRING" id="284812.Q9HGN5"/>
<dbReference type="iPTMnet" id="Q9HGN5"/>
<dbReference type="PaxDb" id="4896-SPBC36B7.05c.1"/>
<dbReference type="EnsemblFungi" id="SPBC36B7.05c.1">
    <property type="protein sequence ID" value="SPBC36B7.05c.1:pep"/>
    <property type="gene ID" value="SPBC36B7.05c"/>
</dbReference>
<dbReference type="KEGG" id="spo:2540987"/>
<dbReference type="PomBase" id="SPBC36B7.05c"/>
<dbReference type="VEuPathDB" id="FungiDB:SPBC36B7.05c"/>
<dbReference type="eggNOG" id="KOG1729">
    <property type="taxonomic scope" value="Eukaryota"/>
</dbReference>
<dbReference type="HOGENOM" id="CLU_069851_0_0_1"/>
<dbReference type="InParanoid" id="Q9HGN5"/>
<dbReference type="OMA" id="NFCPLHD"/>
<dbReference type="PhylomeDB" id="Q9HGN5"/>
<dbReference type="UniPathway" id="UPA00143"/>
<dbReference type="PRO" id="PR:Q9HGN5"/>
<dbReference type="Proteomes" id="UP000002485">
    <property type="component" value="Chromosome II"/>
</dbReference>
<dbReference type="GO" id="GO:0005829">
    <property type="term" value="C:cytosol"/>
    <property type="evidence" value="ECO:0007005"/>
    <property type="project" value="PomBase"/>
</dbReference>
<dbReference type="GO" id="GO:0010008">
    <property type="term" value="C:endosome membrane"/>
    <property type="evidence" value="ECO:0007669"/>
    <property type="project" value="UniProtKB-SubCell"/>
</dbReference>
<dbReference type="GO" id="GO:0005770">
    <property type="term" value="C:late endosome"/>
    <property type="evidence" value="ECO:0000266"/>
    <property type="project" value="PomBase"/>
</dbReference>
<dbReference type="GO" id="GO:0005634">
    <property type="term" value="C:nucleus"/>
    <property type="evidence" value="ECO:0007005"/>
    <property type="project" value="PomBase"/>
</dbReference>
<dbReference type="GO" id="GO:0005774">
    <property type="term" value="C:vacuolar membrane"/>
    <property type="evidence" value="ECO:0007669"/>
    <property type="project" value="UniProtKB-SubCell"/>
</dbReference>
<dbReference type="GO" id="GO:0032266">
    <property type="term" value="F:phosphatidylinositol-3-phosphate binding"/>
    <property type="evidence" value="ECO:0000266"/>
    <property type="project" value="PomBase"/>
</dbReference>
<dbReference type="GO" id="GO:0061630">
    <property type="term" value="F:ubiquitin protein ligase activity"/>
    <property type="evidence" value="ECO:0000316"/>
    <property type="project" value="PomBase"/>
</dbReference>
<dbReference type="GO" id="GO:0008270">
    <property type="term" value="F:zinc ion binding"/>
    <property type="evidence" value="ECO:0007669"/>
    <property type="project" value="UniProtKB-KW"/>
</dbReference>
<dbReference type="GO" id="GO:0071629">
    <property type="term" value="P:cytoplasm protein quality control by the ubiquitin-proteasome system"/>
    <property type="evidence" value="ECO:0000316"/>
    <property type="project" value="PomBase"/>
</dbReference>
<dbReference type="GO" id="GO:0016567">
    <property type="term" value="P:protein ubiquitination"/>
    <property type="evidence" value="ECO:0000318"/>
    <property type="project" value="GO_Central"/>
</dbReference>
<dbReference type="CDD" id="cd16489">
    <property type="entry name" value="mRING-CH-C4HC2H_ZNRF"/>
    <property type="match status" value="1"/>
</dbReference>
<dbReference type="FunFam" id="3.30.40.10:FF:000510">
    <property type="entry name" value="Phosphatidylinositol 3,5-kinase"/>
    <property type="match status" value="1"/>
</dbReference>
<dbReference type="Gene3D" id="3.30.40.10">
    <property type="entry name" value="Zinc/RING finger domain, C3HC4 (zinc finger)"/>
    <property type="match status" value="2"/>
</dbReference>
<dbReference type="InterPro" id="IPR052113">
    <property type="entry name" value="FYVE-type_Zinc_Finger"/>
</dbReference>
<dbReference type="InterPro" id="IPR000306">
    <property type="entry name" value="Znf_FYVE"/>
</dbReference>
<dbReference type="InterPro" id="IPR017455">
    <property type="entry name" value="Znf_FYVE-rel"/>
</dbReference>
<dbReference type="InterPro" id="IPR011011">
    <property type="entry name" value="Znf_FYVE_PHD"/>
</dbReference>
<dbReference type="InterPro" id="IPR001841">
    <property type="entry name" value="Znf_RING"/>
</dbReference>
<dbReference type="InterPro" id="IPR013083">
    <property type="entry name" value="Znf_RING/FYVE/PHD"/>
</dbReference>
<dbReference type="PANTHER" id="PTHR39490">
    <property type="entry name" value="ARRESTIN DOMAIN-CONTAINING PROTEIN D"/>
    <property type="match status" value="1"/>
</dbReference>
<dbReference type="PANTHER" id="PTHR39490:SF8">
    <property type="entry name" value="ZINC FINGER FYVE DOMAIN-CONTAINING PROTEIN 21"/>
    <property type="match status" value="1"/>
</dbReference>
<dbReference type="Pfam" id="PF01363">
    <property type="entry name" value="FYVE"/>
    <property type="match status" value="1"/>
</dbReference>
<dbReference type="Pfam" id="PF13639">
    <property type="entry name" value="zf-RING_2"/>
    <property type="match status" value="1"/>
</dbReference>
<dbReference type="SMART" id="SM00064">
    <property type="entry name" value="FYVE"/>
    <property type="match status" value="1"/>
</dbReference>
<dbReference type="SUPFAM" id="SSF57903">
    <property type="entry name" value="FYVE/PHD zinc finger"/>
    <property type="match status" value="1"/>
</dbReference>
<dbReference type="SUPFAM" id="SSF57850">
    <property type="entry name" value="RING/U-box"/>
    <property type="match status" value="1"/>
</dbReference>
<dbReference type="PROSITE" id="PS50178">
    <property type="entry name" value="ZF_FYVE"/>
    <property type="match status" value="1"/>
</dbReference>
<dbReference type="PROSITE" id="PS50089">
    <property type="entry name" value="ZF_RING_2"/>
    <property type="match status" value="1"/>
</dbReference>
<proteinExistence type="evidence at protein level"/>